<reference key="1">
    <citation type="journal article" date="2000" name="J. Biol. Chem.">
        <title>A novel mammalian iron-regulated protein involved in intracellular iron metabolism.</title>
        <authorList>
            <person name="Abboud S."/>
            <person name="Haile D.J."/>
        </authorList>
    </citation>
    <scope>NUCLEOTIDE SEQUENCE [GENOMIC DNA / MRNA]</scope>
</reference>
<reference key="2">
    <citation type="journal article" date="2000" name="Nature">
        <title>Positional cloning of zebrafish ferroportin1 identifies a conserved vertebrate iron exporter.</title>
        <authorList>
            <person name="Donovan A."/>
            <person name="Brownlie A."/>
            <person name="Zhou Y."/>
            <person name="Shepard J."/>
            <person name="Pratt S.J."/>
            <person name="Moynihan J."/>
            <person name="Paw B.H."/>
            <person name="Drejer A."/>
            <person name="Barut B."/>
            <person name="Zapata A."/>
            <person name="Law T.C."/>
            <person name="Brugnara C."/>
            <person name="Lux S.E. IV"/>
            <person name="Pinkus G.S."/>
            <person name="Pinkus J.L."/>
            <person name="Kingsley P.D."/>
            <person name="Palis J."/>
            <person name="Fleming M.D."/>
            <person name="Andrews N.C."/>
            <person name="Zon L.I."/>
        </authorList>
    </citation>
    <scope>NUCLEOTIDE SEQUENCE [MRNA]</scope>
    <scope>TISSUE SPECIFICITY</scope>
    <scope>SUBCELLULAR LOCATION</scope>
    <source>
        <tissue>Liver</tissue>
    </source>
</reference>
<reference key="3">
    <citation type="journal article" date="2000" name="Mol. Cell">
        <title>A novel duodenal iron-regulated transporter, IREG1, implicated in the basolateral transfer of iron to the circulation.</title>
        <authorList>
            <person name="McKie A.T."/>
            <person name="Marciani P."/>
            <person name="Rolfs A."/>
            <person name="Brennan K."/>
            <person name="Wehr K."/>
            <person name="Barrow D."/>
            <person name="Miret S."/>
            <person name="Bomford A."/>
            <person name="Peters T.J."/>
            <person name="Farzaneh F."/>
            <person name="Hediger M.A."/>
            <person name="Hentze M.W."/>
            <person name="Simpson R.J."/>
        </authorList>
    </citation>
    <scope>NUCLEOTIDE SEQUENCE [MRNA]</scope>
</reference>
<reference key="4">
    <citation type="journal article" date="2005" name="Science">
        <title>The transcriptional landscape of the mammalian genome.</title>
        <authorList>
            <person name="Carninci P."/>
            <person name="Kasukawa T."/>
            <person name="Katayama S."/>
            <person name="Gough J."/>
            <person name="Frith M.C."/>
            <person name="Maeda N."/>
            <person name="Oyama R."/>
            <person name="Ravasi T."/>
            <person name="Lenhard B."/>
            <person name="Wells C."/>
            <person name="Kodzius R."/>
            <person name="Shimokawa K."/>
            <person name="Bajic V.B."/>
            <person name="Brenner S.E."/>
            <person name="Batalov S."/>
            <person name="Forrest A.R."/>
            <person name="Zavolan M."/>
            <person name="Davis M.J."/>
            <person name="Wilming L.G."/>
            <person name="Aidinis V."/>
            <person name="Allen J.E."/>
            <person name="Ambesi-Impiombato A."/>
            <person name="Apweiler R."/>
            <person name="Aturaliya R.N."/>
            <person name="Bailey T.L."/>
            <person name="Bansal M."/>
            <person name="Baxter L."/>
            <person name="Beisel K.W."/>
            <person name="Bersano T."/>
            <person name="Bono H."/>
            <person name="Chalk A.M."/>
            <person name="Chiu K.P."/>
            <person name="Choudhary V."/>
            <person name="Christoffels A."/>
            <person name="Clutterbuck D.R."/>
            <person name="Crowe M.L."/>
            <person name="Dalla E."/>
            <person name="Dalrymple B.P."/>
            <person name="de Bono B."/>
            <person name="Della Gatta G."/>
            <person name="di Bernardo D."/>
            <person name="Down T."/>
            <person name="Engstrom P."/>
            <person name="Fagiolini M."/>
            <person name="Faulkner G."/>
            <person name="Fletcher C.F."/>
            <person name="Fukushima T."/>
            <person name="Furuno M."/>
            <person name="Futaki S."/>
            <person name="Gariboldi M."/>
            <person name="Georgii-Hemming P."/>
            <person name="Gingeras T.R."/>
            <person name="Gojobori T."/>
            <person name="Green R.E."/>
            <person name="Gustincich S."/>
            <person name="Harbers M."/>
            <person name="Hayashi Y."/>
            <person name="Hensch T.K."/>
            <person name="Hirokawa N."/>
            <person name="Hill D."/>
            <person name="Huminiecki L."/>
            <person name="Iacono M."/>
            <person name="Ikeo K."/>
            <person name="Iwama A."/>
            <person name="Ishikawa T."/>
            <person name="Jakt M."/>
            <person name="Kanapin A."/>
            <person name="Katoh M."/>
            <person name="Kawasawa Y."/>
            <person name="Kelso J."/>
            <person name="Kitamura H."/>
            <person name="Kitano H."/>
            <person name="Kollias G."/>
            <person name="Krishnan S.P."/>
            <person name="Kruger A."/>
            <person name="Kummerfeld S.K."/>
            <person name="Kurochkin I.V."/>
            <person name="Lareau L.F."/>
            <person name="Lazarevic D."/>
            <person name="Lipovich L."/>
            <person name="Liu J."/>
            <person name="Liuni S."/>
            <person name="McWilliam S."/>
            <person name="Madan Babu M."/>
            <person name="Madera M."/>
            <person name="Marchionni L."/>
            <person name="Matsuda H."/>
            <person name="Matsuzawa S."/>
            <person name="Miki H."/>
            <person name="Mignone F."/>
            <person name="Miyake S."/>
            <person name="Morris K."/>
            <person name="Mottagui-Tabar S."/>
            <person name="Mulder N."/>
            <person name="Nakano N."/>
            <person name="Nakauchi H."/>
            <person name="Ng P."/>
            <person name="Nilsson R."/>
            <person name="Nishiguchi S."/>
            <person name="Nishikawa S."/>
            <person name="Nori F."/>
            <person name="Ohara O."/>
            <person name="Okazaki Y."/>
            <person name="Orlando V."/>
            <person name="Pang K.C."/>
            <person name="Pavan W.J."/>
            <person name="Pavesi G."/>
            <person name="Pesole G."/>
            <person name="Petrovsky N."/>
            <person name="Piazza S."/>
            <person name="Reed J."/>
            <person name="Reid J.F."/>
            <person name="Ring B.Z."/>
            <person name="Ringwald M."/>
            <person name="Rost B."/>
            <person name="Ruan Y."/>
            <person name="Salzberg S.L."/>
            <person name="Sandelin A."/>
            <person name="Schneider C."/>
            <person name="Schoenbach C."/>
            <person name="Sekiguchi K."/>
            <person name="Semple C.A."/>
            <person name="Seno S."/>
            <person name="Sessa L."/>
            <person name="Sheng Y."/>
            <person name="Shibata Y."/>
            <person name="Shimada H."/>
            <person name="Shimada K."/>
            <person name="Silva D."/>
            <person name="Sinclair B."/>
            <person name="Sperling S."/>
            <person name="Stupka E."/>
            <person name="Sugiura K."/>
            <person name="Sultana R."/>
            <person name="Takenaka Y."/>
            <person name="Taki K."/>
            <person name="Tammoja K."/>
            <person name="Tan S.L."/>
            <person name="Tang S."/>
            <person name="Taylor M.S."/>
            <person name="Tegner J."/>
            <person name="Teichmann S.A."/>
            <person name="Ueda H.R."/>
            <person name="van Nimwegen E."/>
            <person name="Verardo R."/>
            <person name="Wei C.L."/>
            <person name="Yagi K."/>
            <person name="Yamanishi H."/>
            <person name="Zabarovsky E."/>
            <person name="Zhu S."/>
            <person name="Zimmer A."/>
            <person name="Hide W."/>
            <person name="Bult C."/>
            <person name="Grimmond S.M."/>
            <person name="Teasdale R.D."/>
            <person name="Liu E.T."/>
            <person name="Brusic V."/>
            <person name="Quackenbush J."/>
            <person name="Wahlestedt C."/>
            <person name="Mattick J.S."/>
            <person name="Hume D.A."/>
            <person name="Kai C."/>
            <person name="Sasaki D."/>
            <person name="Tomaru Y."/>
            <person name="Fukuda S."/>
            <person name="Kanamori-Katayama M."/>
            <person name="Suzuki M."/>
            <person name="Aoki J."/>
            <person name="Arakawa T."/>
            <person name="Iida J."/>
            <person name="Imamura K."/>
            <person name="Itoh M."/>
            <person name="Kato T."/>
            <person name="Kawaji H."/>
            <person name="Kawagashira N."/>
            <person name="Kawashima T."/>
            <person name="Kojima M."/>
            <person name="Kondo S."/>
            <person name="Konno H."/>
            <person name="Nakano K."/>
            <person name="Ninomiya N."/>
            <person name="Nishio T."/>
            <person name="Okada M."/>
            <person name="Plessy C."/>
            <person name="Shibata K."/>
            <person name="Shiraki T."/>
            <person name="Suzuki S."/>
            <person name="Tagami M."/>
            <person name="Waki K."/>
            <person name="Watahiki A."/>
            <person name="Okamura-Oho Y."/>
            <person name="Suzuki H."/>
            <person name="Kawai J."/>
            <person name="Hayashizaki Y."/>
        </authorList>
    </citation>
    <scope>NUCLEOTIDE SEQUENCE [LARGE SCALE MRNA]</scope>
    <source>
        <strain>C57BL/6J</strain>
        <tissue>Embryo</tissue>
        <tissue>Liver</tissue>
        <tissue>Lung</tissue>
        <tissue>Stomach</tissue>
    </source>
</reference>
<reference key="5">
    <citation type="journal article" date="2004" name="Genome Res.">
        <title>The status, quality, and expansion of the NIH full-length cDNA project: the Mammalian Gene Collection (MGC).</title>
        <authorList>
            <consortium name="The MGC Project Team"/>
        </authorList>
    </citation>
    <scope>NUCLEOTIDE SEQUENCE [LARGE SCALE MRNA]</scope>
    <source>
        <tissue>Mammary tumor</tissue>
    </source>
</reference>
<reference key="6">
    <citation type="journal article" date="2005" name="Cell Metab.">
        <title>The iron exporter ferroportin/Slc40a1 is essential for iron homeostasis.</title>
        <authorList>
            <person name="Donovan A."/>
            <person name="Lima C.A."/>
            <person name="Pinkus J.L."/>
            <person name="Pinkus G.S."/>
            <person name="Zon L.I."/>
            <person name="Robine S."/>
            <person name="Andrews N.C."/>
        </authorList>
    </citation>
    <scope>FUNCTION</scope>
    <scope>DISRUPTION PHENOTYPE</scope>
    <scope>TRANSPORTER ACTIVITY</scope>
</reference>
<reference key="7">
    <citation type="journal article" date="2018" name="Blood">
        <title>Ferroportin deficiency in erythroid cells causes serum iron deficiency and promotes hemolysis due to oxidative stress.</title>
        <authorList>
            <person name="Zhang D.L."/>
            <person name="Ghosh M.C."/>
            <person name="Ollivierre H."/>
            <person name="Li Y."/>
            <person name="Rouault T.A."/>
        </authorList>
    </citation>
    <scope>FUNCTION</scope>
    <scope>DISRUPTION PHENOTYPE</scope>
    <scope>TRANSPORTER ACTIVITY</scope>
</reference>
<reference key="8">
    <citation type="journal article" date="2018" name="Science">
        <title>Erythrocytic ferroportin reduces intracellular iron accumulation, hemolysis, and malaria risk.</title>
        <authorList>
            <person name="Zhang D.L."/>
            <person name="Wu J."/>
            <person name="Shah B.N."/>
            <person name="Greutelaers K.C."/>
            <person name="Ghosh M.C."/>
            <person name="Ollivierre H."/>
            <person name="Su X.Z."/>
            <person name="Thuma P.E."/>
            <person name="Bedu-Addo G."/>
            <person name="Mockenhaupt F.P."/>
            <person name="Gordeuk V.R."/>
            <person name="Rouault T.A."/>
        </authorList>
    </citation>
    <scope>FUNCTION</scope>
    <scope>TRANSPORTER ACTIVITY</scope>
</reference>
<reference key="9">
    <citation type="journal article" date="2019" name="Metallomics">
        <title>Mice overexpressing hepcidin suggest ferroportin does not play a major role in Mn homeostasis.</title>
        <authorList>
            <person name="Jin L."/>
            <person name="Frazer D.M."/>
            <person name="Lu Y."/>
            <person name="Wilkins S.J."/>
            <person name="Ayton S."/>
            <person name="Bush A."/>
            <person name="Anderson G.J."/>
        </authorList>
    </citation>
    <scope>FUNCTION</scope>
    <scope>CAUTION</scope>
</reference>
<reference key="10">
    <citation type="journal article" date="2021" name="Blood">
        <title>RNF217 regulates iron homeostasis through its E3 ubiquitin ligase activity by modulating ferroportin degradation.</title>
        <authorList>
            <person name="Jiang L."/>
            <person name="Wang J."/>
            <person name="Wang K."/>
            <person name="Wang H."/>
            <person name="Wu Q."/>
            <person name="Yang C."/>
            <person name="Yu Y."/>
            <person name="Ni P."/>
            <person name="Zhong Y."/>
            <person name="Song Z."/>
            <person name="Xie E."/>
            <person name="Hu R."/>
            <person name="Min J."/>
            <person name="Wang F."/>
        </authorList>
    </citation>
    <scope>UBIQUITINATION BY RNF217</scope>
</reference>
<sequence length="570" mass="62702">MTKARDQTHQEGCCGSLANYLTSAKFLLYLGHSLSTWGDRMWHFAVSVFLVELYGNSLLLTAVYGLVVAGSVLVLGAIIGDWVDKNARLKVAQTSLVVQNVSVILCGIILMMVFLHKNELLTMYHGWVLTVCYILIITIANIANLASTATAITIQRDWIVVVAGENRSRLADMNATIRRIDQLTNILAPMAVGQIMTFGSPVIGCGFISGWNLVSMCVEYFLLWKVYQKTPALAVKAALKVEESELKQLTSPKDTEPKPLEGTHLMGEKDSNIRELECEQEPTCASQMAEPFRTFRDGWVSYYNQPVFLAGMGLAFLYMTVLGFDCITTGYAYTQGLSGSILSILMGASAITGIMGTVAFTWLRRKCGLVRTGLFSGLAQLSCLILCVISVFMPGSPLDLSVSPFEDIRSRFVNVEPVSPTTKIPETVFTTEMHMSNMSNVHEMSTKPIPIVSVSLLFAGVIAARIGLWSFDLTVTQLLQENVIESERGIINGVQNSMNYLLDLLHFIMVILAPNPEAFGLLVLISVSFVAMGHLMYFRFAQKTLGNQIFVCGPDEKEVTDENQPNTSVV</sequence>
<gene>
    <name evidence="11" type="primary">Slc40a1</name>
    <name type="synonym">Fpn1</name>
    <name evidence="8" type="synonym">Ireg1</name>
    <name type="synonym">Slc11a3</name>
    <name type="synonym">Slc39a1</name>
</gene>
<evidence type="ECO:0000250" key="1">
    <source>
        <dbReference type="UniProtKB" id="Q9NP59"/>
    </source>
</evidence>
<evidence type="ECO:0000255" key="2"/>
<evidence type="ECO:0000269" key="3">
    <source>
    </source>
</evidence>
<evidence type="ECO:0000269" key="4">
    <source>
    </source>
</evidence>
<evidence type="ECO:0000269" key="5">
    <source>
    </source>
</evidence>
<evidence type="ECO:0000269" key="6">
    <source>
    </source>
</evidence>
<evidence type="ECO:0000269" key="7">
    <source>
    </source>
</evidence>
<evidence type="ECO:0000303" key="8">
    <source>
    </source>
</evidence>
<evidence type="ECO:0000303" key="9">
    <source>
    </source>
</evidence>
<evidence type="ECO:0000305" key="10"/>
<evidence type="ECO:0000312" key="11">
    <source>
        <dbReference type="MGI" id="MGI:1315204"/>
    </source>
</evidence>
<comment type="function">
    <text evidence="1 4 5">Transports Fe(2+) from the inside of a cell to the outside of the cell, playing a key role for maintaining systemic iron homeostasis (PubMed:16054062, PubMed:30213870). Transports iron from intestinal, splenic, hepatic cells, macrophages and erythrocytes into the blood to provide iron to other tissues. Controls therefore dietary iron uptake, iron recycling by macrophages and erythrocytes, and release of iron stores in hepatocytes (PubMed:16054062, PubMed:30213870). When iron is in excess in serum, circulating HAMP/hepcidin levels increase resulting in a degradation of SLC40A1, thus limiting the iron efflux to plasma (By similarity).</text>
</comment>
<comment type="catalytic activity">
    <reaction evidence="4 5">
        <text>Fe(2+)(in) = Fe(2+)(out)</text>
        <dbReference type="Rhea" id="RHEA:28486"/>
        <dbReference type="ChEBI" id="CHEBI:29033"/>
    </reaction>
</comment>
<comment type="subunit">
    <text evidence="1">Identified in a complex with STOM. Interacts with HAMP; affinity of the peptide hormone HAMP for SLC40A1 increases by 80-fold in the presence of iron and the interaction promotes SLC40A1 ubiquitination and degradation. Part of a complex composed of SLC40A1/ferroportin, TF/transferrin and HEPH/hephaestin that transfers iron from cells to transferrin.</text>
</comment>
<comment type="interaction">
    <interactant intactId="EBI-2931424">
        <id>Q9JHI9</id>
    </interactant>
    <interactant intactId="EBI-78814">
        <id>P12023</id>
        <label>App</label>
    </interactant>
    <organismsDiffer>false</organismsDiffer>
    <experiments>2</experiments>
</comment>
<comment type="interaction">
    <interactant intactId="EBI-2931424">
        <id>Q9JHI9</id>
    </interactant>
    <interactant intactId="EBI-2931424">
        <id>Q9JHI9</id>
        <label>Slc40a1</label>
    </interactant>
    <organismsDiffer>false</organismsDiffer>
    <experiments>2</experiments>
</comment>
<comment type="interaction">
    <interactant intactId="EBI-2931424">
        <id>Q9JHI9</id>
    </interactant>
    <interactant intactId="EBI-518647">
        <id>O60674</id>
        <label>JAK2</label>
    </interactant>
    <organismsDiffer>true</organismsDiffer>
    <experiments>3</experiments>
</comment>
<comment type="subcellular location">
    <subcellularLocation>
        <location evidence="1">Cell membrane</location>
        <topology evidence="1">Multi-pass membrane protein</topology>
    </subcellularLocation>
    <subcellularLocation>
        <location evidence="3">Basolateral cell membrane</location>
        <topology evidence="1">Multi-pass membrane protein</topology>
    </subcellularLocation>
    <text evidence="3">Localized to the basolateral membrane of polarized epithelial cells.</text>
</comment>
<comment type="tissue specificity">
    <text evidence="3">High expression in spleen, liver, kidney, heart and duodenum.</text>
</comment>
<comment type="PTM">
    <text evidence="1 7">Polyubiquitinated by RNF217; leading to proteasomal degradation (PubMed:33895792). Under conditions of high systemic iron levels, both the hormone peptide hepcidin/HAMP and holo(iron bound)-transferrin/TF induce the ubiquitination, internalization and proteasomal degradation of SLC40A1 to control iron release from cells (By similarity).</text>
</comment>
<comment type="disruption phenotype">
    <text evidence="4 5">Deficient mice exhibit embryonic lethality. These mice cannot transfer iron from the extraembryonic visceral endoderm into the embryo proper, leading to a defect in embryonic growth and consequent death (PubMed:16054062). Erythroid-specific deletion reduces serum iron but increased tissue iron contents (PubMed:30213870).</text>
</comment>
<comment type="similarity">
    <text evidence="10">Belongs to the ferroportin (FP) (TC 2.A.100) family. SLC40A subfamily.</text>
</comment>
<comment type="caution">
    <text evidence="1 6 10">Manganese (Mn) transport by SLC40A1 remains controversial. Some in vitro studies have suggested that SLC40A1 transports minimal amounts of Mn(2+) (By similarity). Other groups have suggested that it does not (By similarity). The predicted apparent affinity of SLC40A1 for manganese is extremely low compared with iron, implying that any SLC40A1-mediated Mn transport in vivo would likely be trivial (By similarity). A recent study examined the role of SLC40A1 in Mn homeostasis by using Tmprss6-O mice, which express high levels of hepcidin/HAMP and therefore have very low SLC40A1 levels in their tissues. These mice show frank iron deficiency and reduced iron levels in most tissues, but manganese levels are largely unaffected (PubMed:30888356). These studies suggest that manganese is propably not the physiological substrate of SLC40A1.</text>
</comment>
<feature type="chain" id="PRO_0000191311" description="Ferroportin">
    <location>
        <begin position="1"/>
        <end position="570"/>
    </location>
</feature>
<feature type="topological domain" description="Cytoplasmic" evidence="1">
    <location>
        <begin position="1"/>
        <end position="23"/>
    </location>
</feature>
<feature type="transmembrane region" description="Helical" evidence="1">
    <location>
        <begin position="24"/>
        <end position="53"/>
    </location>
</feature>
<feature type="topological domain" description="Extracellular" evidence="1">
    <location>
        <begin position="54"/>
        <end position="57"/>
    </location>
</feature>
<feature type="transmembrane region" description="Helical" evidence="1">
    <location>
        <begin position="58"/>
        <end position="84"/>
    </location>
</feature>
<feature type="topological domain" description="Cytoplasmic" evidence="1">
    <location>
        <begin position="85"/>
        <end position="87"/>
    </location>
</feature>
<feature type="transmembrane region" description="Helical" evidence="1">
    <location>
        <begin position="88"/>
        <end position="118"/>
    </location>
</feature>
<feature type="topological domain" description="Extracellular" evidence="1">
    <location>
        <begin position="119"/>
        <end position="126"/>
    </location>
</feature>
<feature type="transmembrane region" description="Helical" evidence="1">
    <location>
        <begin position="127"/>
        <end position="162"/>
    </location>
</feature>
<feature type="topological domain" description="Cytoplasmic" evidence="1">
    <location>
        <begin position="163"/>
        <end position="164"/>
    </location>
</feature>
<feature type="transmembrane region" description="Helical" evidence="1">
    <location>
        <begin position="165"/>
        <end position="195"/>
    </location>
</feature>
<feature type="topological domain" description="Extracellular" evidence="1">
    <location>
        <begin position="196"/>
        <end position="202"/>
    </location>
</feature>
<feature type="transmembrane region" description="Helical" evidence="1">
    <location>
        <begin position="203"/>
        <end position="229"/>
    </location>
</feature>
<feature type="topological domain" description="Cytoplasmic" evidence="1">
    <location>
        <begin position="230"/>
        <end position="306"/>
    </location>
</feature>
<feature type="transmembrane region" description="Helical" evidence="1">
    <location>
        <begin position="307"/>
        <end position="333"/>
    </location>
</feature>
<feature type="topological domain" description="Extracellular" evidence="1">
    <location>
        <begin position="334"/>
        <end position="338"/>
    </location>
</feature>
<feature type="transmembrane region" description="Helical" evidence="1">
    <location>
        <begin position="339"/>
        <end position="366"/>
    </location>
</feature>
<feature type="topological domain" description="Cytoplasmic" evidence="1">
    <location>
        <begin position="367"/>
        <end position="368"/>
    </location>
</feature>
<feature type="transmembrane region" description="Helical" evidence="1">
    <location>
        <begin position="369"/>
        <end position="391"/>
    </location>
</feature>
<feature type="topological domain" description="Extracellular" evidence="1">
    <location>
        <begin position="392"/>
        <end position="452"/>
    </location>
</feature>
<feature type="transmembrane region" description="Helical" evidence="1">
    <location>
        <begin position="453"/>
        <end position="482"/>
    </location>
</feature>
<feature type="topological domain" description="Cytoplasmic" evidence="1">
    <location>
        <begin position="483"/>
        <end position="487"/>
    </location>
</feature>
<feature type="transmembrane region" description="Helical" evidence="1">
    <location>
        <begin position="488"/>
        <end position="512"/>
    </location>
</feature>
<feature type="topological domain" description="Extracellular" evidence="1">
    <location>
        <begin position="513"/>
        <end position="515"/>
    </location>
</feature>
<feature type="transmembrane region" description="Helical" evidence="1">
    <location>
        <begin position="516"/>
        <end position="541"/>
    </location>
</feature>
<feature type="topological domain" description="Cytoplasmic" evidence="1">
    <location>
        <begin position="542"/>
        <end position="570"/>
    </location>
</feature>
<feature type="binding site" evidence="1">
    <location>
        <position position="39"/>
    </location>
    <ligand>
        <name>Fe cation</name>
        <dbReference type="ChEBI" id="CHEBI:24875"/>
        <label>1</label>
    </ligand>
</feature>
<feature type="binding site" evidence="1">
    <location>
        <position position="43"/>
    </location>
    <ligand>
        <name>Fe cation</name>
        <dbReference type="ChEBI" id="CHEBI:24875"/>
        <label>1</label>
    </ligand>
</feature>
<feature type="binding site" evidence="1">
    <location>
        <position position="326"/>
    </location>
    <ligand>
        <name>Fe cation</name>
        <dbReference type="ChEBI" id="CHEBI:24875"/>
        <label>2</label>
    </ligand>
</feature>
<feature type="binding site" evidence="1">
    <location>
        <position position="506"/>
    </location>
    <ligand>
        <name>Fe cation</name>
        <dbReference type="ChEBI" id="CHEBI:24875"/>
        <label>2</label>
    </ligand>
</feature>
<feature type="glycosylation site" description="N-linked (GlcNAc...) asparagine" evidence="2">
    <location>
        <position position="437"/>
    </location>
</feature>
<keyword id="KW-1003">Cell membrane</keyword>
<keyword id="KW-0325">Glycoprotein</keyword>
<keyword id="KW-0406">Ion transport</keyword>
<keyword id="KW-0408">Iron</keyword>
<keyword id="KW-0410">Iron transport</keyword>
<keyword id="KW-0472">Membrane</keyword>
<keyword id="KW-0479">Metal-binding</keyword>
<keyword id="KW-1185">Reference proteome</keyword>
<keyword id="KW-0812">Transmembrane</keyword>
<keyword id="KW-1133">Transmembrane helix</keyword>
<keyword id="KW-0813">Transport</keyword>
<keyword id="KW-0832">Ubl conjugation</keyword>
<protein>
    <recommendedName>
        <fullName evidence="9">Ferroportin</fullName>
    </recommendedName>
    <alternativeName>
        <fullName>Ferroportin-1</fullName>
    </alternativeName>
    <alternativeName>
        <fullName>Iron-regulated transporter 1</fullName>
    </alternativeName>
    <alternativeName>
        <fullName>Metal transporter protein 1</fullName>
        <shortName>MTP1</shortName>
    </alternativeName>
    <alternativeName>
        <fullName evidence="11">Solute carrier family 40 member 1</fullName>
    </alternativeName>
</protein>
<dbReference type="EMBL" id="AF215637">
    <property type="protein sequence ID" value="AAF80987.1"/>
    <property type="molecule type" value="mRNA"/>
</dbReference>
<dbReference type="EMBL" id="AF216834">
    <property type="protein sequence ID" value="AAF82036.1"/>
    <property type="molecule type" value="Genomic_DNA"/>
</dbReference>
<dbReference type="EMBL" id="AF226613">
    <property type="protein sequence ID" value="AAF36696.1"/>
    <property type="molecule type" value="mRNA"/>
</dbReference>
<dbReference type="EMBL" id="AF231120">
    <property type="protein sequence ID" value="AAF44329.1"/>
    <property type="molecule type" value="mRNA"/>
</dbReference>
<dbReference type="EMBL" id="AK008700">
    <property type="protein sequence ID" value="BAB25840.1"/>
    <property type="molecule type" value="mRNA"/>
</dbReference>
<dbReference type="EMBL" id="AK032732">
    <property type="protein sequence ID" value="BAC28001.1"/>
    <property type="molecule type" value="mRNA"/>
</dbReference>
<dbReference type="EMBL" id="AK083288">
    <property type="protein sequence ID" value="BAC38844.1"/>
    <property type="molecule type" value="mRNA"/>
</dbReference>
<dbReference type="EMBL" id="AK144780">
    <property type="protein sequence ID" value="BAE26063.1"/>
    <property type="molecule type" value="mRNA"/>
</dbReference>
<dbReference type="EMBL" id="AK147137">
    <property type="protein sequence ID" value="BAE27707.1"/>
    <property type="molecule type" value="mRNA"/>
</dbReference>
<dbReference type="EMBL" id="AK159294">
    <property type="protein sequence ID" value="BAE34969.1"/>
    <property type="molecule type" value="mRNA"/>
</dbReference>
<dbReference type="EMBL" id="AK159855">
    <property type="protein sequence ID" value="BAE35431.1"/>
    <property type="molecule type" value="mRNA"/>
</dbReference>
<dbReference type="EMBL" id="BC003438">
    <property type="protein sequence ID" value="AAH03438.1"/>
    <property type="molecule type" value="mRNA"/>
</dbReference>
<dbReference type="CCDS" id="CCDS14933.1"/>
<dbReference type="RefSeq" id="NP_058613.2">
    <property type="nucleotide sequence ID" value="NM_016917.2"/>
</dbReference>
<dbReference type="RefSeq" id="XP_006496200.1">
    <property type="nucleotide sequence ID" value="XM_006496137.4"/>
</dbReference>
<dbReference type="RefSeq" id="XP_017177198.1">
    <property type="nucleotide sequence ID" value="XM_017321709.3"/>
</dbReference>
<dbReference type="SMR" id="Q9JHI9"/>
<dbReference type="BioGRID" id="207527">
    <property type="interactions" value="1"/>
</dbReference>
<dbReference type="DIP" id="DIP-58649N"/>
<dbReference type="FunCoup" id="Q9JHI9">
    <property type="interactions" value="667"/>
</dbReference>
<dbReference type="IntAct" id="Q9JHI9">
    <property type="interactions" value="4"/>
</dbReference>
<dbReference type="STRING" id="10090.ENSMUSP00000027137"/>
<dbReference type="ChEMBL" id="CHEMBL4523462"/>
<dbReference type="GuidetoPHARMACOLOGY" id="1194"/>
<dbReference type="TCDB" id="2.A.100.1.1">
    <property type="family name" value="the ferroportin (fpn) family"/>
</dbReference>
<dbReference type="GlyCosmos" id="Q9JHI9">
    <property type="glycosylation" value="1 site, No reported glycans"/>
</dbReference>
<dbReference type="GlyGen" id="Q9JHI9">
    <property type="glycosylation" value="1 site"/>
</dbReference>
<dbReference type="iPTMnet" id="Q9JHI9"/>
<dbReference type="PhosphoSitePlus" id="Q9JHI9"/>
<dbReference type="SwissPalm" id="Q9JHI9"/>
<dbReference type="PaxDb" id="10090-ENSMUSP00000027137"/>
<dbReference type="ProteomicsDB" id="256902"/>
<dbReference type="Antibodypedia" id="34022">
    <property type="antibodies" value="398 antibodies from 35 providers"/>
</dbReference>
<dbReference type="DNASU" id="53945"/>
<dbReference type="Ensembl" id="ENSMUST00000027137.11">
    <property type="protein sequence ID" value="ENSMUSP00000027137.5"/>
    <property type="gene ID" value="ENSMUSG00000025993.11"/>
</dbReference>
<dbReference type="GeneID" id="53945"/>
<dbReference type="KEGG" id="mmu:53945"/>
<dbReference type="UCSC" id="uc007awu.1">
    <property type="organism name" value="mouse"/>
</dbReference>
<dbReference type="AGR" id="MGI:1315204"/>
<dbReference type="CTD" id="30061"/>
<dbReference type="MGI" id="MGI:1315204">
    <property type="gene designation" value="Slc40a1"/>
</dbReference>
<dbReference type="VEuPathDB" id="HostDB:ENSMUSG00000025993"/>
<dbReference type="eggNOG" id="KOG2601">
    <property type="taxonomic scope" value="Eukaryota"/>
</dbReference>
<dbReference type="GeneTree" id="ENSGT00390000015143"/>
<dbReference type="HOGENOM" id="CLU_020370_1_1_1"/>
<dbReference type="InParanoid" id="Q9JHI9"/>
<dbReference type="OMA" id="VAMGHVM"/>
<dbReference type="OrthoDB" id="648861at2759"/>
<dbReference type="PhylomeDB" id="Q9JHI9"/>
<dbReference type="TreeFam" id="TF313463"/>
<dbReference type="Reactome" id="R-MMU-425410">
    <property type="pathway name" value="Metal ion SLC transporters"/>
</dbReference>
<dbReference type="Reactome" id="R-MMU-917937">
    <property type="pathway name" value="Iron uptake and transport"/>
</dbReference>
<dbReference type="BioGRID-ORCS" id="53945">
    <property type="hits" value="3 hits in 79 CRISPR screens"/>
</dbReference>
<dbReference type="ChiTaRS" id="Slc40a1">
    <property type="organism name" value="mouse"/>
</dbReference>
<dbReference type="PRO" id="PR:Q9JHI9"/>
<dbReference type="Proteomes" id="UP000000589">
    <property type="component" value="Chromosome 1"/>
</dbReference>
<dbReference type="RNAct" id="Q9JHI9">
    <property type="molecule type" value="protein"/>
</dbReference>
<dbReference type="Bgee" id="ENSMUSG00000025993">
    <property type="expression patterns" value="Expressed in epithelium of small intestine and 240 other cell types or tissues"/>
</dbReference>
<dbReference type="ExpressionAtlas" id="Q9JHI9">
    <property type="expression patterns" value="baseline and differential"/>
</dbReference>
<dbReference type="GO" id="GO:0016323">
    <property type="term" value="C:basolateral plasma membrane"/>
    <property type="evidence" value="ECO:0000316"/>
    <property type="project" value="BHF-UCL"/>
</dbReference>
<dbReference type="GO" id="GO:0005829">
    <property type="term" value="C:cytosol"/>
    <property type="evidence" value="ECO:0007669"/>
    <property type="project" value="Ensembl"/>
</dbReference>
<dbReference type="GO" id="GO:0005654">
    <property type="term" value="C:nucleoplasm"/>
    <property type="evidence" value="ECO:0007669"/>
    <property type="project" value="Ensembl"/>
</dbReference>
<dbReference type="GO" id="GO:0005886">
    <property type="term" value="C:plasma membrane"/>
    <property type="evidence" value="ECO:0000314"/>
    <property type="project" value="MGI"/>
</dbReference>
<dbReference type="GO" id="GO:0008021">
    <property type="term" value="C:synaptic vesicle"/>
    <property type="evidence" value="ECO:0000314"/>
    <property type="project" value="MGI"/>
</dbReference>
<dbReference type="GO" id="GO:0015093">
    <property type="term" value="F:ferrous iron transmembrane transporter activity"/>
    <property type="evidence" value="ECO:0000314"/>
    <property type="project" value="BHF-UCL"/>
</dbReference>
<dbReference type="GO" id="GO:0042802">
    <property type="term" value="F:identical protein binding"/>
    <property type="evidence" value="ECO:0000353"/>
    <property type="project" value="IntAct"/>
</dbReference>
<dbReference type="GO" id="GO:0005381">
    <property type="term" value="F:iron ion transmembrane transporter activity"/>
    <property type="evidence" value="ECO:0000314"/>
    <property type="project" value="BHF-UCL"/>
</dbReference>
<dbReference type="GO" id="GO:0046872">
    <property type="term" value="F:metal ion binding"/>
    <property type="evidence" value="ECO:0007669"/>
    <property type="project" value="UniProtKB-KW"/>
</dbReference>
<dbReference type="GO" id="GO:0017046">
    <property type="term" value="F:peptide hormone binding"/>
    <property type="evidence" value="ECO:0000353"/>
    <property type="project" value="BHF-UCL"/>
</dbReference>
<dbReference type="GO" id="GO:0006915">
    <property type="term" value="P:apoptotic process"/>
    <property type="evidence" value="ECO:0000315"/>
    <property type="project" value="MGI"/>
</dbReference>
<dbReference type="GO" id="GO:0003158">
    <property type="term" value="P:endothelium development"/>
    <property type="evidence" value="ECO:0000315"/>
    <property type="project" value="MGI"/>
</dbReference>
<dbReference type="GO" id="GO:0051649">
    <property type="term" value="P:establishment of localization in cell"/>
    <property type="evidence" value="ECO:0000316"/>
    <property type="project" value="MGI"/>
</dbReference>
<dbReference type="GO" id="GO:0006879">
    <property type="term" value="P:intracellular iron ion homeostasis"/>
    <property type="evidence" value="ECO:0007669"/>
    <property type="project" value="Ensembl"/>
</dbReference>
<dbReference type="GO" id="GO:1903988">
    <property type="term" value="P:iron ion export across plasma membrane"/>
    <property type="evidence" value="ECO:0000314"/>
    <property type="project" value="UniProtKB"/>
</dbReference>
<dbReference type="GO" id="GO:0034755">
    <property type="term" value="P:iron ion transmembrane transport"/>
    <property type="evidence" value="ECO:0000316"/>
    <property type="project" value="MGI"/>
</dbReference>
<dbReference type="GO" id="GO:0006826">
    <property type="term" value="P:iron ion transport"/>
    <property type="evidence" value="ECO:0000314"/>
    <property type="project" value="MGI"/>
</dbReference>
<dbReference type="GO" id="GO:0002260">
    <property type="term" value="P:lymphocyte homeostasis"/>
    <property type="evidence" value="ECO:0000315"/>
    <property type="project" value="MGI"/>
</dbReference>
<dbReference type="GO" id="GO:0060586">
    <property type="term" value="P:multicellular organismal-level iron ion homeostasis"/>
    <property type="evidence" value="ECO:0000315"/>
    <property type="project" value="BHF-UCL"/>
</dbReference>
<dbReference type="GO" id="GO:0043066">
    <property type="term" value="P:negative regulation of apoptotic process"/>
    <property type="evidence" value="ECO:0000315"/>
    <property type="project" value="MGI"/>
</dbReference>
<dbReference type="GO" id="GO:0045944">
    <property type="term" value="P:positive regulation of transcription by RNA polymerase II"/>
    <property type="evidence" value="ECO:0000316"/>
    <property type="project" value="MGI"/>
</dbReference>
<dbReference type="GO" id="GO:0048536">
    <property type="term" value="P:spleen development"/>
    <property type="evidence" value="ECO:0000315"/>
    <property type="project" value="MGI"/>
</dbReference>
<dbReference type="GO" id="GO:0060345">
    <property type="term" value="P:spleen trabecula formation"/>
    <property type="evidence" value="ECO:0000315"/>
    <property type="project" value="MGI"/>
</dbReference>
<dbReference type="GO" id="GO:0006366">
    <property type="term" value="P:transcription by RNA polymerase II"/>
    <property type="evidence" value="ECO:0000316"/>
    <property type="project" value="MGI"/>
</dbReference>
<dbReference type="CDD" id="cd17480">
    <property type="entry name" value="MFS_SLC40A1_like"/>
    <property type="match status" value="1"/>
</dbReference>
<dbReference type="Gene3D" id="1.20.1250.20">
    <property type="entry name" value="MFS general substrate transporter like domains"/>
    <property type="match status" value="1"/>
</dbReference>
<dbReference type="InterPro" id="IPR009716">
    <property type="entry name" value="Ferroportin-1"/>
</dbReference>
<dbReference type="InterPro" id="IPR036259">
    <property type="entry name" value="MFS_trans_sf"/>
</dbReference>
<dbReference type="PANTHER" id="PTHR11660">
    <property type="entry name" value="SOLUTE CARRIER FAMILY 40 MEMBER"/>
    <property type="match status" value="1"/>
</dbReference>
<dbReference type="PANTHER" id="PTHR11660:SF47">
    <property type="entry name" value="SOLUTE CARRIER FAMILY 40 MEMBER 1"/>
    <property type="match status" value="1"/>
</dbReference>
<dbReference type="Pfam" id="PF06963">
    <property type="entry name" value="FPN1"/>
    <property type="match status" value="1"/>
</dbReference>
<dbReference type="SUPFAM" id="SSF103473">
    <property type="entry name" value="MFS general substrate transporter"/>
    <property type="match status" value="1"/>
</dbReference>
<organism>
    <name type="scientific">Mus musculus</name>
    <name type="common">Mouse</name>
    <dbReference type="NCBI Taxonomy" id="10090"/>
    <lineage>
        <taxon>Eukaryota</taxon>
        <taxon>Metazoa</taxon>
        <taxon>Chordata</taxon>
        <taxon>Craniata</taxon>
        <taxon>Vertebrata</taxon>
        <taxon>Euteleostomi</taxon>
        <taxon>Mammalia</taxon>
        <taxon>Eutheria</taxon>
        <taxon>Euarchontoglires</taxon>
        <taxon>Glires</taxon>
        <taxon>Rodentia</taxon>
        <taxon>Myomorpha</taxon>
        <taxon>Muroidea</taxon>
        <taxon>Muridae</taxon>
        <taxon>Murinae</taxon>
        <taxon>Mus</taxon>
        <taxon>Mus</taxon>
    </lineage>
</organism>
<accession>Q9JHI9</accession>
<accession>Q3UHZ9</accession>
<accession>Q8BME5</accession>
<accession>Q8BUM5</accession>
<accession>Q9JIM9</accession>
<accession>Q9JKP4</accession>
<name>S40A1_MOUSE</name>
<proteinExistence type="evidence at protein level"/>